<proteinExistence type="inferred from homology"/>
<protein>
    <recommendedName>
        <fullName evidence="2">Small ribosomal subunit protein uS7c</fullName>
    </recommendedName>
    <alternativeName>
        <fullName>30S ribosomal protein S7, chloroplastic</fullName>
    </alternativeName>
</protein>
<evidence type="ECO:0000250" key="1"/>
<evidence type="ECO:0000305" key="2"/>
<keyword id="KW-0150">Chloroplast</keyword>
<keyword id="KW-0934">Plastid</keyword>
<keyword id="KW-0687">Ribonucleoprotein</keyword>
<keyword id="KW-0689">Ribosomal protein</keyword>
<keyword id="KW-0694">RNA-binding</keyword>
<keyword id="KW-0699">rRNA-binding</keyword>
<dbReference type="EMBL" id="EF506945">
    <property type="protein sequence ID" value="ABO69325.1"/>
    <property type="molecule type" value="Genomic_DNA"/>
</dbReference>
<dbReference type="RefSeq" id="YP_001382188.1">
    <property type="nucleotide sequence ID" value="NC_009681.1"/>
</dbReference>
<dbReference type="SMR" id="A6YGB1"/>
<dbReference type="GeneID" id="5383819"/>
<dbReference type="GO" id="GO:0009507">
    <property type="term" value="C:chloroplast"/>
    <property type="evidence" value="ECO:0007669"/>
    <property type="project" value="UniProtKB-SubCell"/>
</dbReference>
<dbReference type="GO" id="GO:0015935">
    <property type="term" value="C:small ribosomal subunit"/>
    <property type="evidence" value="ECO:0007669"/>
    <property type="project" value="InterPro"/>
</dbReference>
<dbReference type="GO" id="GO:0019843">
    <property type="term" value="F:rRNA binding"/>
    <property type="evidence" value="ECO:0007669"/>
    <property type="project" value="UniProtKB-UniRule"/>
</dbReference>
<dbReference type="GO" id="GO:0003735">
    <property type="term" value="F:structural constituent of ribosome"/>
    <property type="evidence" value="ECO:0007669"/>
    <property type="project" value="InterPro"/>
</dbReference>
<dbReference type="GO" id="GO:0006412">
    <property type="term" value="P:translation"/>
    <property type="evidence" value="ECO:0007669"/>
    <property type="project" value="UniProtKB-UniRule"/>
</dbReference>
<dbReference type="CDD" id="cd14871">
    <property type="entry name" value="uS7_Chloroplast"/>
    <property type="match status" value="1"/>
</dbReference>
<dbReference type="FunFam" id="1.10.455.10:FF:000001">
    <property type="entry name" value="30S ribosomal protein S7"/>
    <property type="match status" value="1"/>
</dbReference>
<dbReference type="Gene3D" id="1.10.455.10">
    <property type="entry name" value="Ribosomal protein S7 domain"/>
    <property type="match status" value="1"/>
</dbReference>
<dbReference type="HAMAP" id="MF_00480_B">
    <property type="entry name" value="Ribosomal_uS7_B"/>
    <property type="match status" value="1"/>
</dbReference>
<dbReference type="InterPro" id="IPR000235">
    <property type="entry name" value="Ribosomal_uS7"/>
</dbReference>
<dbReference type="InterPro" id="IPR005717">
    <property type="entry name" value="Ribosomal_uS7_bac/org-type"/>
</dbReference>
<dbReference type="InterPro" id="IPR020606">
    <property type="entry name" value="Ribosomal_uS7_CS"/>
</dbReference>
<dbReference type="InterPro" id="IPR023798">
    <property type="entry name" value="Ribosomal_uS7_dom"/>
</dbReference>
<dbReference type="InterPro" id="IPR036823">
    <property type="entry name" value="Ribosomal_uS7_dom_sf"/>
</dbReference>
<dbReference type="NCBIfam" id="TIGR01029">
    <property type="entry name" value="rpsG_bact"/>
    <property type="match status" value="1"/>
</dbReference>
<dbReference type="PANTHER" id="PTHR11205">
    <property type="entry name" value="RIBOSOMAL PROTEIN S7"/>
    <property type="match status" value="1"/>
</dbReference>
<dbReference type="Pfam" id="PF00177">
    <property type="entry name" value="Ribosomal_S7"/>
    <property type="match status" value="1"/>
</dbReference>
<dbReference type="PIRSF" id="PIRSF002122">
    <property type="entry name" value="RPS7p_RPS7a_RPS5e_RPS7o"/>
    <property type="match status" value="1"/>
</dbReference>
<dbReference type="SUPFAM" id="SSF47973">
    <property type="entry name" value="Ribosomal protein S7"/>
    <property type="match status" value="1"/>
</dbReference>
<dbReference type="PROSITE" id="PS00052">
    <property type="entry name" value="RIBOSOMAL_S7"/>
    <property type="match status" value="1"/>
</dbReference>
<accession>A6YGB1</accession>
<comment type="function">
    <text evidence="1">One of the primary rRNA binding proteins, it binds directly to 16S rRNA where it nucleates assembly of the head domain of the 30S subunit.</text>
</comment>
<comment type="subunit">
    <text evidence="1">Part of the 30S ribosomal subunit.</text>
</comment>
<comment type="subcellular location">
    <subcellularLocation>
        <location>Plastid</location>
        <location>Chloroplast</location>
    </subcellularLocation>
</comment>
<comment type="similarity">
    <text evidence="2">Belongs to the universal ribosomal protein uS7 family.</text>
</comment>
<geneLocation type="chloroplast"/>
<name>RR7_PLETE</name>
<sequence length="154" mass="17548">MSRRRTPKKRVIAPDALYNSVLVHTIVNHLMKKGKKSLAYMMFYETLSEIKQKTEQDPLEVIQKAVNNVRPLVIVKSRRVSGSTRQVPLSVDYEIGVALAIRWILAACRKRVGKSMISKMTNEFLDASKNIGNAIRKKDEIAKMAQANRAYARF</sequence>
<feature type="chain" id="PRO_0000344346" description="Small ribosomal subunit protein uS7c">
    <location>
        <begin position="1"/>
        <end position="154"/>
    </location>
</feature>
<gene>
    <name type="primary">rps7</name>
</gene>
<organism>
    <name type="scientific">Pleurastrum terricola</name>
    <name type="common">Filamentous green alga</name>
    <name type="synonym">Leptosira terrestris</name>
    <dbReference type="NCBI Taxonomy" id="34116"/>
    <lineage>
        <taxon>Eukaryota</taxon>
        <taxon>Viridiplantae</taxon>
        <taxon>Chlorophyta</taxon>
        <taxon>core chlorophytes</taxon>
        <taxon>Chlorophyceae</taxon>
        <taxon>CS clade</taxon>
        <taxon>Chlamydomonadales</taxon>
        <taxon>Pleurastraceae</taxon>
        <taxon>Pleurastrum</taxon>
    </lineage>
</organism>
<reference key="1">
    <citation type="journal article" date="2007" name="BMC Genomics">
        <title>The chloroplast genome sequence of the green alga Leptosira terrestris: multiple losses of the inverted repeat and extensive genome rearrangements within the Trebouxiophyceae.</title>
        <authorList>
            <person name="de Cambiaire J.-C."/>
            <person name="Otis C."/>
            <person name="Turmel M."/>
            <person name="Lemieux C."/>
        </authorList>
    </citation>
    <scope>NUCLEOTIDE SEQUENCE [LARGE SCALE GENOMIC DNA]</scope>
    <source>
        <strain>CCAP 463/2 / UTEX 333</strain>
    </source>
</reference>